<sequence>MKLVVLVALWLWPSSLLAYPTITVLPDEEQNLNHYVHILQNLIMSVPTKEQDLGKKLSSSRTVDSAEPRSLASKVLLTPGLVSAQDVTPESDVLIRPVDETTNSRTRGFTLRRRRTQSTAFWSIRPNNISVVLRTEEPFIEKEPEPELESSRLPTEPEPELEPEPEPVAESRQMSEPEEELVTSTTPNKELTGTSRISSMATQPANTQATRITVTVKTTSTMDVSTDSEDVPQLSGQSEIPSAEDLPGRHSLNTRHEDILKKISNINAEIQQGLLGGNNSPEFKEFIKASREHLKRSLALAAAAEHKLEQMYGSNVFPEGRTSDPDNDMEMIINMLYNSRSKLSDYFNIKRVPSELREKASVVNAELRKILCVDQVEMQSLIKKLLSNNMKILNILNVP</sequence>
<feature type="signal peptide" evidence="2">
    <location>
        <begin position="1"/>
        <end position="18"/>
    </location>
</feature>
<feature type="chain" id="PRO_0000042709" description="Sperm equatorial segment protein 1">
    <location>
        <begin position="19"/>
        <end position="399"/>
    </location>
</feature>
<feature type="region of interest" description="Disordered" evidence="3">
    <location>
        <begin position="136"/>
        <end position="250"/>
    </location>
</feature>
<feature type="compositionally biased region" description="Basic and acidic residues" evidence="3">
    <location>
        <begin position="136"/>
        <end position="145"/>
    </location>
</feature>
<feature type="compositionally biased region" description="Acidic residues" evidence="3">
    <location>
        <begin position="157"/>
        <end position="167"/>
    </location>
</feature>
<feature type="compositionally biased region" description="Polar residues" evidence="3">
    <location>
        <begin position="182"/>
        <end position="206"/>
    </location>
</feature>
<feature type="compositionally biased region" description="Low complexity" evidence="3">
    <location>
        <begin position="207"/>
        <end position="225"/>
    </location>
</feature>
<feature type="glycosylation site" description="N-linked (GlcNAc...) asparagine" evidence="2">
    <location>
        <position position="128"/>
    </location>
</feature>
<feature type="sequence conflict" description="In Ref. 1; BAB29908." evidence="6" ref="1">
    <original>ES</original>
    <variation>DP</variation>
    <location>
        <begin position="170"/>
        <end position="171"/>
    </location>
</feature>
<feature type="sequence conflict" description="In Ref. 1; BAB29908." evidence="6" ref="1">
    <original>R</original>
    <variation>Q</variation>
    <location>
        <position position="196"/>
    </location>
</feature>
<dbReference type="EMBL" id="AK014843">
    <property type="protein sequence ID" value="BAB29577.1"/>
    <property type="molecule type" value="mRNA"/>
</dbReference>
<dbReference type="EMBL" id="AK015620">
    <property type="protein sequence ID" value="BAB29908.1"/>
    <property type="molecule type" value="mRNA"/>
</dbReference>
<dbReference type="EMBL" id="BC050754">
    <property type="protein sequence ID" value="AAH50754.1"/>
    <property type="molecule type" value="mRNA"/>
</dbReference>
<dbReference type="CCDS" id="CCDS23263.1"/>
<dbReference type="RefSeq" id="NP_079997.1">
    <property type="nucleotide sequence ID" value="NM_025721.2"/>
</dbReference>
<dbReference type="SMR" id="Q9D5A0"/>
<dbReference type="FunCoup" id="Q9D5A0">
    <property type="interactions" value="305"/>
</dbReference>
<dbReference type="IntAct" id="Q9D5A0">
    <property type="interactions" value="1"/>
</dbReference>
<dbReference type="STRING" id="10090.ENSMUSP00000058522"/>
<dbReference type="GlyCosmos" id="Q9D5A0">
    <property type="glycosylation" value="1 site, No reported glycans"/>
</dbReference>
<dbReference type="GlyGen" id="Q9D5A0">
    <property type="glycosylation" value="1 site"/>
</dbReference>
<dbReference type="PhosphoSitePlus" id="Q9D5A0"/>
<dbReference type="SwissPalm" id="Q9D5A0"/>
<dbReference type="PaxDb" id="10090-ENSMUSP00000058522"/>
<dbReference type="PeptideAtlas" id="Q9D5A0"/>
<dbReference type="ProteomicsDB" id="258719"/>
<dbReference type="Antibodypedia" id="51298">
    <property type="antibodies" value="77 antibodies from 16 providers"/>
</dbReference>
<dbReference type="DNASU" id="66712"/>
<dbReference type="Ensembl" id="ENSMUST00000056949.5">
    <property type="protein sequence ID" value="ENSMUSP00000058522.4"/>
    <property type="gene ID" value="ENSMUSG00000046846.5"/>
</dbReference>
<dbReference type="GeneID" id="66712"/>
<dbReference type="KEGG" id="mmu:66712"/>
<dbReference type="UCSC" id="uc009qag.1">
    <property type="organism name" value="mouse"/>
</dbReference>
<dbReference type="AGR" id="MGI:1913962"/>
<dbReference type="CTD" id="246777"/>
<dbReference type="MGI" id="MGI:1913962">
    <property type="gene designation" value="Spesp1"/>
</dbReference>
<dbReference type="VEuPathDB" id="HostDB:ENSMUSG00000046846"/>
<dbReference type="eggNOG" id="ENOG502SG7W">
    <property type="taxonomic scope" value="Eukaryota"/>
</dbReference>
<dbReference type="GeneTree" id="ENSGT00390000005362"/>
<dbReference type="HOGENOM" id="CLU_787463_0_0_1"/>
<dbReference type="InParanoid" id="Q9D5A0"/>
<dbReference type="OMA" id="TESTAFW"/>
<dbReference type="OrthoDB" id="9530574at2759"/>
<dbReference type="PhylomeDB" id="Q9D5A0"/>
<dbReference type="TreeFam" id="TF337441"/>
<dbReference type="BioGRID-ORCS" id="66712">
    <property type="hits" value="2 hits in 76 CRISPR screens"/>
</dbReference>
<dbReference type="PRO" id="PR:Q9D5A0"/>
<dbReference type="Proteomes" id="UP000000589">
    <property type="component" value="Chromosome 9"/>
</dbReference>
<dbReference type="RNAct" id="Q9D5A0">
    <property type="molecule type" value="protein"/>
</dbReference>
<dbReference type="Bgee" id="ENSMUSG00000046846">
    <property type="expression patterns" value="Expressed in spermatid and 12 other cell types or tissues"/>
</dbReference>
<dbReference type="GO" id="GO:0001669">
    <property type="term" value="C:acrosomal vesicle"/>
    <property type="evidence" value="ECO:0000314"/>
    <property type="project" value="MGI"/>
</dbReference>
<dbReference type="GO" id="GO:0007340">
    <property type="term" value="P:acrosome reaction"/>
    <property type="evidence" value="ECO:0000315"/>
    <property type="project" value="MGI"/>
</dbReference>
<dbReference type="GO" id="GO:0009566">
    <property type="term" value="P:fertilization"/>
    <property type="evidence" value="ECO:0000314"/>
    <property type="project" value="UniProtKB"/>
</dbReference>
<dbReference type="GO" id="GO:0007342">
    <property type="term" value="P:fusion of sperm to egg plasma membrane involved in single fertilization"/>
    <property type="evidence" value="ECO:0000315"/>
    <property type="project" value="MGI"/>
</dbReference>
<dbReference type="GO" id="GO:0035036">
    <property type="term" value="P:sperm-egg recognition"/>
    <property type="evidence" value="ECO:0000314"/>
    <property type="project" value="UniProtKB"/>
</dbReference>
<dbReference type="InterPro" id="IPR026743">
    <property type="entry name" value="Equatorial_segment"/>
</dbReference>
<dbReference type="PANTHER" id="PTHR31667">
    <property type="entry name" value="SPERM EQUATORIAL SEGMENT PROTEIN 1"/>
    <property type="match status" value="1"/>
</dbReference>
<dbReference type="PANTHER" id="PTHR31667:SF2">
    <property type="entry name" value="SPERM EQUATORIAL SEGMENT PROTEIN 1"/>
    <property type="match status" value="1"/>
</dbReference>
<dbReference type="Pfam" id="PF15754">
    <property type="entry name" value="SPESP1"/>
    <property type="match status" value="1"/>
</dbReference>
<name>SPESP_MOUSE</name>
<evidence type="ECO:0000250" key="1">
    <source>
        <dbReference type="UniProtKB" id="Q6UW49"/>
    </source>
</evidence>
<evidence type="ECO:0000255" key="2"/>
<evidence type="ECO:0000256" key="3">
    <source>
        <dbReference type="SAM" id="MobiDB-lite"/>
    </source>
</evidence>
<evidence type="ECO:0000269" key="4">
    <source>
    </source>
</evidence>
<evidence type="ECO:0000269" key="5">
    <source>
    </source>
</evidence>
<evidence type="ECO:0000305" key="6"/>
<evidence type="ECO:0000312" key="7">
    <source>
        <dbReference type="MGI" id="MGI:1913962"/>
    </source>
</evidence>
<protein>
    <recommendedName>
        <fullName evidence="1">Sperm equatorial segment protein 1</fullName>
    </recommendedName>
</protein>
<reference key="1">
    <citation type="journal article" date="2005" name="Science">
        <title>The transcriptional landscape of the mammalian genome.</title>
        <authorList>
            <person name="Carninci P."/>
            <person name="Kasukawa T."/>
            <person name="Katayama S."/>
            <person name="Gough J."/>
            <person name="Frith M.C."/>
            <person name="Maeda N."/>
            <person name="Oyama R."/>
            <person name="Ravasi T."/>
            <person name="Lenhard B."/>
            <person name="Wells C."/>
            <person name="Kodzius R."/>
            <person name="Shimokawa K."/>
            <person name="Bajic V.B."/>
            <person name="Brenner S.E."/>
            <person name="Batalov S."/>
            <person name="Forrest A.R."/>
            <person name="Zavolan M."/>
            <person name="Davis M.J."/>
            <person name="Wilming L.G."/>
            <person name="Aidinis V."/>
            <person name="Allen J.E."/>
            <person name="Ambesi-Impiombato A."/>
            <person name="Apweiler R."/>
            <person name="Aturaliya R.N."/>
            <person name="Bailey T.L."/>
            <person name="Bansal M."/>
            <person name="Baxter L."/>
            <person name="Beisel K.W."/>
            <person name="Bersano T."/>
            <person name="Bono H."/>
            <person name="Chalk A.M."/>
            <person name="Chiu K.P."/>
            <person name="Choudhary V."/>
            <person name="Christoffels A."/>
            <person name="Clutterbuck D.R."/>
            <person name="Crowe M.L."/>
            <person name="Dalla E."/>
            <person name="Dalrymple B.P."/>
            <person name="de Bono B."/>
            <person name="Della Gatta G."/>
            <person name="di Bernardo D."/>
            <person name="Down T."/>
            <person name="Engstrom P."/>
            <person name="Fagiolini M."/>
            <person name="Faulkner G."/>
            <person name="Fletcher C.F."/>
            <person name="Fukushima T."/>
            <person name="Furuno M."/>
            <person name="Futaki S."/>
            <person name="Gariboldi M."/>
            <person name="Georgii-Hemming P."/>
            <person name="Gingeras T.R."/>
            <person name="Gojobori T."/>
            <person name="Green R.E."/>
            <person name="Gustincich S."/>
            <person name="Harbers M."/>
            <person name="Hayashi Y."/>
            <person name="Hensch T.K."/>
            <person name="Hirokawa N."/>
            <person name="Hill D."/>
            <person name="Huminiecki L."/>
            <person name="Iacono M."/>
            <person name="Ikeo K."/>
            <person name="Iwama A."/>
            <person name="Ishikawa T."/>
            <person name="Jakt M."/>
            <person name="Kanapin A."/>
            <person name="Katoh M."/>
            <person name="Kawasawa Y."/>
            <person name="Kelso J."/>
            <person name="Kitamura H."/>
            <person name="Kitano H."/>
            <person name="Kollias G."/>
            <person name="Krishnan S.P."/>
            <person name="Kruger A."/>
            <person name="Kummerfeld S.K."/>
            <person name="Kurochkin I.V."/>
            <person name="Lareau L.F."/>
            <person name="Lazarevic D."/>
            <person name="Lipovich L."/>
            <person name="Liu J."/>
            <person name="Liuni S."/>
            <person name="McWilliam S."/>
            <person name="Madan Babu M."/>
            <person name="Madera M."/>
            <person name="Marchionni L."/>
            <person name="Matsuda H."/>
            <person name="Matsuzawa S."/>
            <person name="Miki H."/>
            <person name="Mignone F."/>
            <person name="Miyake S."/>
            <person name="Morris K."/>
            <person name="Mottagui-Tabar S."/>
            <person name="Mulder N."/>
            <person name="Nakano N."/>
            <person name="Nakauchi H."/>
            <person name="Ng P."/>
            <person name="Nilsson R."/>
            <person name="Nishiguchi S."/>
            <person name="Nishikawa S."/>
            <person name="Nori F."/>
            <person name="Ohara O."/>
            <person name="Okazaki Y."/>
            <person name="Orlando V."/>
            <person name="Pang K.C."/>
            <person name="Pavan W.J."/>
            <person name="Pavesi G."/>
            <person name="Pesole G."/>
            <person name="Petrovsky N."/>
            <person name="Piazza S."/>
            <person name="Reed J."/>
            <person name="Reid J.F."/>
            <person name="Ring B.Z."/>
            <person name="Ringwald M."/>
            <person name="Rost B."/>
            <person name="Ruan Y."/>
            <person name="Salzberg S.L."/>
            <person name="Sandelin A."/>
            <person name="Schneider C."/>
            <person name="Schoenbach C."/>
            <person name="Sekiguchi K."/>
            <person name="Semple C.A."/>
            <person name="Seno S."/>
            <person name="Sessa L."/>
            <person name="Sheng Y."/>
            <person name="Shibata Y."/>
            <person name="Shimada H."/>
            <person name="Shimada K."/>
            <person name="Silva D."/>
            <person name="Sinclair B."/>
            <person name="Sperling S."/>
            <person name="Stupka E."/>
            <person name="Sugiura K."/>
            <person name="Sultana R."/>
            <person name="Takenaka Y."/>
            <person name="Taki K."/>
            <person name="Tammoja K."/>
            <person name="Tan S.L."/>
            <person name="Tang S."/>
            <person name="Taylor M.S."/>
            <person name="Tegner J."/>
            <person name="Teichmann S.A."/>
            <person name="Ueda H.R."/>
            <person name="van Nimwegen E."/>
            <person name="Verardo R."/>
            <person name="Wei C.L."/>
            <person name="Yagi K."/>
            <person name="Yamanishi H."/>
            <person name="Zabarovsky E."/>
            <person name="Zhu S."/>
            <person name="Zimmer A."/>
            <person name="Hide W."/>
            <person name="Bult C."/>
            <person name="Grimmond S.M."/>
            <person name="Teasdale R.D."/>
            <person name="Liu E.T."/>
            <person name="Brusic V."/>
            <person name="Quackenbush J."/>
            <person name="Wahlestedt C."/>
            <person name="Mattick J.S."/>
            <person name="Hume D.A."/>
            <person name="Kai C."/>
            <person name="Sasaki D."/>
            <person name="Tomaru Y."/>
            <person name="Fukuda S."/>
            <person name="Kanamori-Katayama M."/>
            <person name="Suzuki M."/>
            <person name="Aoki J."/>
            <person name="Arakawa T."/>
            <person name="Iida J."/>
            <person name="Imamura K."/>
            <person name="Itoh M."/>
            <person name="Kato T."/>
            <person name="Kawaji H."/>
            <person name="Kawagashira N."/>
            <person name="Kawashima T."/>
            <person name="Kojima M."/>
            <person name="Kondo S."/>
            <person name="Konno H."/>
            <person name="Nakano K."/>
            <person name="Ninomiya N."/>
            <person name="Nishio T."/>
            <person name="Okada M."/>
            <person name="Plessy C."/>
            <person name="Shibata K."/>
            <person name="Shiraki T."/>
            <person name="Suzuki S."/>
            <person name="Tagami M."/>
            <person name="Waki K."/>
            <person name="Watahiki A."/>
            <person name="Okamura-Oho Y."/>
            <person name="Suzuki H."/>
            <person name="Kawai J."/>
            <person name="Hayashizaki Y."/>
        </authorList>
    </citation>
    <scope>NUCLEOTIDE SEQUENCE [LARGE SCALE MRNA]</scope>
    <source>
        <strain>C57BL/6J</strain>
        <tissue>Testis</tissue>
    </source>
</reference>
<reference key="2">
    <citation type="journal article" date="2004" name="Genome Res.">
        <title>The status, quality, and expansion of the NIH full-length cDNA project: the Mammalian Gene Collection (MGC).</title>
        <authorList>
            <consortium name="The MGC Project Team"/>
        </authorList>
    </citation>
    <scope>NUCLEOTIDE SEQUENCE [LARGE SCALE MRNA]</scope>
    <source>
        <tissue>Testis</tissue>
    </source>
</reference>
<reference key="3">
    <citation type="journal article" date="2010" name="Cell">
        <title>A tissue-specific atlas of mouse protein phosphorylation and expression.</title>
        <authorList>
            <person name="Huttlin E.L."/>
            <person name="Jedrychowski M.P."/>
            <person name="Elias J.E."/>
            <person name="Goswami T."/>
            <person name="Rad R."/>
            <person name="Beausoleil S.A."/>
            <person name="Villen J."/>
            <person name="Haas W."/>
            <person name="Sowa M.E."/>
            <person name="Gygi S.P."/>
        </authorList>
    </citation>
    <scope>IDENTIFICATION BY MASS SPECTROMETRY [LARGE SCALE ANALYSIS]</scope>
    <source>
        <tissue>Testis</tissue>
    </source>
</reference>
<reference key="4">
    <citation type="journal article" date="2010" name="J. Cell Sci.">
        <title>Sperm equatorial segment protein 1, SPESP1, is required for fully fertile sperm in mouse.</title>
        <authorList>
            <person name="Fujihara Y."/>
            <person name="Murakami M."/>
            <person name="Inoue N."/>
            <person name="Satouh Y."/>
            <person name="Kaseda K."/>
            <person name="Ikawa M."/>
            <person name="Okabe M."/>
        </authorList>
    </citation>
    <scope>TISSUE SPECIFICITY</scope>
    <scope>SUBCELLULAR LOCATION</scope>
    <scope>DISRUPTION PHENOTYPE</scope>
    <scope>FUNCTION</scope>
</reference>
<reference key="5">
    <citation type="journal article" date="2015" name="Biol. Reprod.">
        <title>Dynamic Changes in Equatorial Segment Protein 1 (SPESP1) Glycosylation During Mouse Spermiogenesis.</title>
        <authorList>
            <person name="Suryavathi V."/>
            <person name="Panneerdoss S."/>
            <person name="Wolkowicz M.J."/>
            <person name="Shetty J."/>
            <person name="Sherman N.E."/>
            <person name="Flickinger C.J."/>
            <person name="Herr J.C."/>
        </authorList>
    </citation>
    <scope>GLYCOSYLATION</scope>
    <scope>FUNCTION</scope>
    <scope>SUBCELLULAR LOCATION</scope>
</reference>
<comment type="function">
    <text evidence="4 5">Involved in fertilization ability of sperm.</text>
</comment>
<comment type="subcellular location">
    <subcellularLocation>
        <location evidence="4">Cytoplasmic vesicle</location>
        <location evidence="4">Secretory vesicle</location>
        <location evidence="4">Acrosome</location>
    </subcellularLocation>
    <text evidence="1 5">Small proacrosomal granules (during the Golgi phase), enlarged acrosomal vesicles (during the cap phase), acrosome (during the elongating phase), equatorial segment of the acrosome (during the maturation phase) (By similarity). After acrosome reaction localizes to the equatorial segment region in both noncapacitated and capacitated, acrosome-reacted sperm (PubMed:25761597).</text>
</comment>
<comment type="tissue specificity">
    <text evidence="4">Testis specific.</text>
</comment>
<comment type="PTM">
    <text evidence="5">Glycosylated. In testis there are two predominant forms of 77- and 67-kDa and a form of 47-kDa, whereas in epididymal sperm from caput, corpus, and cauda there are two forms of 47- and 43-kDa. Testis forms contain complex carbohydrate residues. Epididymal sperm forms are N-glycosylated. Then undergoes significant glycosylation in the testis and that the majority of these glycoconjugates are removed by the time sperm reach the caput epididymis.</text>
</comment>
<comment type="disruption phenotype">
    <text evidence="4">Knockout female mice are fertile, while the average number of pups that are fathered by knockout males is significantly lower than that of wild-type fathers.</text>
</comment>
<comment type="similarity">
    <text evidence="6">Belongs to the SPESP1 family.</text>
</comment>
<accession>Q9D5A0</accession>
<accession>Q9D5X8</accession>
<organism>
    <name type="scientific">Mus musculus</name>
    <name type="common">Mouse</name>
    <dbReference type="NCBI Taxonomy" id="10090"/>
    <lineage>
        <taxon>Eukaryota</taxon>
        <taxon>Metazoa</taxon>
        <taxon>Chordata</taxon>
        <taxon>Craniata</taxon>
        <taxon>Vertebrata</taxon>
        <taxon>Euteleostomi</taxon>
        <taxon>Mammalia</taxon>
        <taxon>Eutheria</taxon>
        <taxon>Euarchontoglires</taxon>
        <taxon>Glires</taxon>
        <taxon>Rodentia</taxon>
        <taxon>Myomorpha</taxon>
        <taxon>Muroidea</taxon>
        <taxon>Muridae</taxon>
        <taxon>Murinae</taxon>
        <taxon>Mus</taxon>
        <taxon>Mus</taxon>
    </lineage>
</organism>
<keyword id="KW-0968">Cytoplasmic vesicle</keyword>
<keyword id="KW-0217">Developmental protein</keyword>
<keyword id="KW-0325">Glycoprotein</keyword>
<keyword id="KW-1185">Reference proteome</keyword>
<keyword id="KW-0732">Signal</keyword>
<gene>
    <name evidence="7" type="primary">Spesp1</name>
</gene>
<proteinExistence type="evidence at protein level"/>